<proteinExistence type="inferred from homology"/>
<reference key="1">
    <citation type="submission" date="2008-02" db="EMBL/GenBank/DDBJ databases">
        <title>Complete sequence of chromosome 1 of Burkholderia cenocepacia MC0-3.</title>
        <authorList>
            <person name="Copeland A."/>
            <person name="Lucas S."/>
            <person name="Lapidus A."/>
            <person name="Barry K."/>
            <person name="Bruce D."/>
            <person name="Goodwin L."/>
            <person name="Glavina del Rio T."/>
            <person name="Dalin E."/>
            <person name="Tice H."/>
            <person name="Pitluck S."/>
            <person name="Chain P."/>
            <person name="Malfatti S."/>
            <person name="Shin M."/>
            <person name="Vergez L."/>
            <person name="Schmutz J."/>
            <person name="Larimer F."/>
            <person name="Land M."/>
            <person name="Hauser L."/>
            <person name="Kyrpides N."/>
            <person name="Mikhailova N."/>
            <person name="Tiedje J."/>
            <person name="Richardson P."/>
        </authorList>
    </citation>
    <scope>NUCLEOTIDE SEQUENCE [LARGE SCALE GENOMIC DNA]</scope>
    <source>
        <strain>MC0-3</strain>
    </source>
</reference>
<gene>
    <name evidence="1" type="primary">pdxH</name>
    <name type="ordered locus">Bcenmc03_2592</name>
</gene>
<dbReference type="EC" id="1.4.3.5" evidence="1"/>
<dbReference type="EMBL" id="CP000958">
    <property type="protein sequence ID" value="ACA91753.1"/>
    <property type="molecule type" value="Genomic_DNA"/>
</dbReference>
<dbReference type="RefSeq" id="WP_012329107.1">
    <property type="nucleotide sequence ID" value="NC_010508.1"/>
</dbReference>
<dbReference type="SMR" id="B1JXH8"/>
<dbReference type="GeneID" id="83049380"/>
<dbReference type="KEGG" id="bcm:Bcenmc03_2592"/>
<dbReference type="HOGENOM" id="CLU_032263_2_2_4"/>
<dbReference type="UniPathway" id="UPA01068">
    <property type="reaction ID" value="UER00304"/>
</dbReference>
<dbReference type="UniPathway" id="UPA01068">
    <property type="reaction ID" value="UER00305"/>
</dbReference>
<dbReference type="Proteomes" id="UP000002169">
    <property type="component" value="Chromosome 1"/>
</dbReference>
<dbReference type="GO" id="GO:0010181">
    <property type="term" value="F:FMN binding"/>
    <property type="evidence" value="ECO:0007669"/>
    <property type="project" value="UniProtKB-UniRule"/>
</dbReference>
<dbReference type="GO" id="GO:0004733">
    <property type="term" value="F:pyridoxamine phosphate oxidase activity"/>
    <property type="evidence" value="ECO:0007669"/>
    <property type="project" value="UniProtKB-UniRule"/>
</dbReference>
<dbReference type="GO" id="GO:0008615">
    <property type="term" value="P:pyridoxine biosynthetic process"/>
    <property type="evidence" value="ECO:0007669"/>
    <property type="project" value="UniProtKB-KW"/>
</dbReference>
<dbReference type="FunFam" id="2.30.110.10:FF:000005">
    <property type="entry name" value="NAD(P)H-hydrate epimerase"/>
    <property type="match status" value="1"/>
</dbReference>
<dbReference type="Gene3D" id="2.30.110.10">
    <property type="entry name" value="Electron Transport, Fmn-binding Protein, Chain A"/>
    <property type="match status" value="1"/>
</dbReference>
<dbReference type="HAMAP" id="MF_01629">
    <property type="entry name" value="PdxH"/>
    <property type="match status" value="1"/>
</dbReference>
<dbReference type="InterPro" id="IPR000659">
    <property type="entry name" value="Pyridox_Oxase"/>
</dbReference>
<dbReference type="InterPro" id="IPR019740">
    <property type="entry name" value="Pyridox_Oxase_CS"/>
</dbReference>
<dbReference type="InterPro" id="IPR011576">
    <property type="entry name" value="Pyridox_Oxase_N"/>
</dbReference>
<dbReference type="InterPro" id="IPR019576">
    <property type="entry name" value="Pyridoxamine_oxidase_dimer_C"/>
</dbReference>
<dbReference type="InterPro" id="IPR012349">
    <property type="entry name" value="Split_barrel_FMN-bd"/>
</dbReference>
<dbReference type="NCBIfam" id="TIGR00558">
    <property type="entry name" value="pdxH"/>
    <property type="match status" value="1"/>
</dbReference>
<dbReference type="NCBIfam" id="NF004231">
    <property type="entry name" value="PRK05679.1"/>
    <property type="match status" value="1"/>
</dbReference>
<dbReference type="PANTHER" id="PTHR10851:SF0">
    <property type="entry name" value="PYRIDOXINE-5'-PHOSPHATE OXIDASE"/>
    <property type="match status" value="1"/>
</dbReference>
<dbReference type="PANTHER" id="PTHR10851">
    <property type="entry name" value="PYRIDOXINE-5-PHOSPHATE OXIDASE"/>
    <property type="match status" value="1"/>
</dbReference>
<dbReference type="Pfam" id="PF10590">
    <property type="entry name" value="PNP_phzG_C"/>
    <property type="match status" value="1"/>
</dbReference>
<dbReference type="Pfam" id="PF01243">
    <property type="entry name" value="PNPOx_N"/>
    <property type="match status" value="1"/>
</dbReference>
<dbReference type="PIRSF" id="PIRSF000190">
    <property type="entry name" value="Pyd_amn-ph_oxd"/>
    <property type="match status" value="1"/>
</dbReference>
<dbReference type="SUPFAM" id="SSF50475">
    <property type="entry name" value="FMN-binding split barrel"/>
    <property type="match status" value="1"/>
</dbReference>
<dbReference type="PROSITE" id="PS01064">
    <property type="entry name" value="PYRIDOX_OXIDASE"/>
    <property type="match status" value="1"/>
</dbReference>
<name>PDXH_BURO0</name>
<feature type="chain" id="PRO_1000186293" description="Pyridoxine/pyridoxamine 5'-phosphate oxidase">
    <location>
        <begin position="1"/>
        <end position="214"/>
    </location>
</feature>
<feature type="binding site" evidence="1">
    <location>
        <begin position="8"/>
        <end position="11"/>
    </location>
    <ligand>
        <name>substrate</name>
    </ligand>
</feature>
<feature type="binding site" evidence="1">
    <location>
        <begin position="61"/>
        <end position="66"/>
    </location>
    <ligand>
        <name>FMN</name>
        <dbReference type="ChEBI" id="CHEBI:58210"/>
    </ligand>
</feature>
<feature type="binding site" evidence="1">
    <location>
        <position position="66"/>
    </location>
    <ligand>
        <name>substrate</name>
    </ligand>
</feature>
<feature type="binding site" evidence="1">
    <location>
        <begin position="76"/>
        <end position="77"/>
    </location>
    <ligand>
        <name>FMN</name>
        <dbReference type="ChEBI" id="CHEBI:58210"/>
    </ligand>
</feature>
<feature type="binding site" evidence="1">
    <location>
        <position position="82"/>
    </location>
    <ligand>
        <name>FMN</name>
        <dbReference type="ChEBI" id="CHEBI:58210"/>
    </ligand>
</feature>
<feature type="binding site" evidence="1">
    <location>
        <position position="83"/>
    </location>
    <ligand>
        <name>FMN</name>
        <dbReference type="ChEBI" id="CHEBI:58210"/>
    </ligand>
</feature>
<feature type="binding site" evidence="1">
    <location>
        <position position="105"/>
    </location>
    <ligand>
        <name>FMN</name>
        <dbReference type="ChEBI" id="CHEBI:58210"/>
    </ligand>
</feature>
<feature type="binding site" evidence="1">
    <location>
        <position position="123"/>
    </location>
    <ligand>
        <name>substrate</name>
    </ligand>
</feature>
<feature type="binding site" evidence="1">
    <location>
        <position position="127"/>
    </location>
    <ligand>
        <name>substrate</name>
    </ligand>
</feature>
<feature type="binding site" evidence="1">
    <location>
        <position position="131"/>
    </location>
    <ligand>
        <name>substrate</name>
    </ligand>
</feature>
<feature type="binding site" evidence="1">
    <location>
        <begin position="140"/>
        <end position="141"/>
    </location>
    <ligand>
        <name>FMN</name>
        <dbReference type="ChEBI" id="CHEBI:58210"/>
    </ligand>
</feature>
<feature type="binding site" evidence="1">
    <location>
        <position position="184"/>
    </location>
    <ligand>
        <name>FMN</name>
        <dbReference type="ChEBI" id="CHEBI:58210"/>
    </ligand>
</feature>
<feature type="binding site" evidence="1">
    <location>
        <begin position="190"/>
        <end position="192"/>
    </location>
    <ligand>
        <name>substrate</name>
    </ligand>
</feature>
<feature type="binding site" evidence="1">
    <location>
        <position position="194"/>
    </location>
    <ligand>
        <name>FMN</name>
        <dbReference type="ChEBI" id="CHEBI:58210"/>
    </ligand>
</feature>
<protein>
    <recommendedName>
        <fullName evidence="1">Pyridoxine/pyridoxamine 5'-phosphate oxidase</fullName>
        <ecNumber evidence="1">1.4.3.5</ecNumber>
    </recommendedName>
    <alternativeName>
        <fullName evidence="1">PNP/PMP oxidase</fullName>
        <shortName evidence="1">PNPOx</shortName>
    </alternativeName>
    <alternativeName>
        <fullName evidence="1">Pyridoxal 5'-phosphate synthase</fullName>
    </alternativeName>
</protein>
<keyword id="KW-0285">Flavoprotein</keyword>
<keyword id="KW-0288">FMN</keyword>
<keyword id="KW-0560">Oxidoreductase</keyword>
<keyword id="KW-0664">Pyridoxine biosynthesis</keyword>
<sequence length="214" mass="24161">MTTLADLRINYSRASLDEADAAPDPFAQFDRWFKEALAAKLPEPNTMTLATVGADGRPSARIVLIKGVDERGFVFFTNYESRKGHDLAVHPQAALLFYWIELERQVRIEGRIEKTSAEESDRYFASRPLGSRIGAWASEQSAVIDSRATLEAREKAVSERYGDNPPRPPHWGGYRLVPDSIEFWQGRPSRLHDRLLYTRDATAAPGWTISRLSP</sequence>
<accession>B1JXH8</accession>
<comment type="function">
    <text evidence="1">Catalyzes the oxidation of either pyridoxine 5'-phosphate (PNP) or pyridoxamine 5'-phosphate (PMP) into pyridoxal 5'-phosphate (PLP).</text>
</comment>
<comment type="catalytic activity">
    <reaction evidence="1">
        <text>pyridoxamine 5'-phosphate + O2 + H2O = pyridoxal 5'-phosphate + H2O2 + NH4(+)</text>
        <dbReference type="Rhea" id="RHEA:15817"/>
        <dbReference type="ChEBI" id="CHEBI:15377"/>
        <dbReference type="ChEBI" id="CHEBI:15379"/>
        <dbReference type="ChEBI" id="CHEBI:16240"/>
        <dbReference type="ChEBI" id="CHEBI:28938"/>
        <dbReference type="ChEBI" id="CHEBI:58451"/>
        <dbReference type="ChEBI" id="CHEBI:597326"/>
        <dbReference type="EC" id="1.4.3.5"/>
    </reaction>
</comment>
<comment type="catalytic activity">
    <reaction evidence="1">
        <text>pyridoxine 5'-phosphate + O2 = pyridoxal 5'-phosphate + H2O2</text>
        <dbReference type="Rhea" id="RHEA:15149"/>
        <dbReference type="ChEBI" id="CHEBI:15379"/>
        <dbReference type="ChEBI" id="CHEBI:16240"/>
        <dbReference type="ChEBI" id="CHEBI:58589"/>
        <dbReference type="ChEBI" id="CHEBI:597326"/>
        <dbReference type="EC" id="1.4.3.5"/>
    </reaction>
</comment>
<comment type="cofactor">
    <cofactor evidence="1">
        <name>FMN</name>
        <dbReference type="ChEBI" id="CHEBI:58210"/>
    </cofactor>
    <text evidence="1">Binds 1 FMN per subunit.</text>
</comment>
<comment type="pathway">
    <text evidence="1">Cofactor metabolism; pyridoxal 5'-phosphate salvage; pyridoxal 5'-phosphate from pyridoxamine 5'-phosphate: step 1/1.</text>
</comment>
<comment type="pathway">
    <text evidence="1">Cofactor metabolism; pyridoxal 5'-phosphate salvage; pyridoxal 5'-phosphate from pyridoxine 5'-phosphate: step 1/1.</text>
</comment>
<comment type="subunit">
    <text evidence="1">Homodimer.</text>
</comment>
<comment type="similarity">
    <text evidence="1">Belongs to the pyridoxamine 5'-phosphate oxidase family.</text>
</comment>
<evidence type="ECO:0000255" key="1">
    <source>
        <dbReference type="HAMAP-Rule" id="MF_01629"/>
    </source>
</evidence>
<organism>
    <name type="scientific">Burkholderia orbicola (strain MC0-3)</name>
    <dbReference type="NCBI Taxonomy" id="406425"/>
    <lineage>
        <taxon>Bacteria</taxon>
        <taxon>Pseudomonadati</taxon>
        <taxon>Pseudomonadota</taxon>
        <taxon>Betaproteobacteria</taxon>
        <taxon>Burkholderiales</taxon>
        <taxon>Burkholderiaceae</taxon>
        <taxon>Burkholderia</taxon>
        <taxon>Burkholderia cepacia complex</taxon>
        <taxon>Burkholderia orbicola</taxon>
    </lineage>
</organism>